<organism>
    <name type="scientific">Escherichia coli O81 (strain ED1a)</name>
    <dbReference type="NCBI Taxonomy" id="585397"/>
    <lineage>
        <taxon>Bacteria</taxon>
        <taxon>Pseudomonadati</taxon>
        <taxon>Pseudomonadota</taxon>
        <taxon>Gammaproteobacteria</taxon>
        <taxon>Enterobacterales</taxon>
        <taxon>Enterobacteriaceae</taxon>
        <taxon>Escherichia</taxon>
    </lineage>
</organism>
<gene>
    <name evidence="1" type="primary">fadR</name>
    <name type="ordered locus">ECED1_1329</name>
</gene>
<reference key="1">
    <citation type="journal article" date="2009" name="PLoS Genet.">
        <title>Organised genome dynamics in the Escherichia coli species results in highly diverse adaptive paths.</title>
        <authorList>
            <person name="Touchon M."/>
            <person name="Hoede C."/>
            <person name="Tenaillon O."/>
            <person name="Barbe V."/>
            <person name="Baeriswyl S."/>
            <person name="Bidet P."/>
            <person name="Bingen E."/>
            <person name="Bonacorsi S."/>
            <person name="Bouchier C."/>
            <person name="Bouvet O."/>
            <person name="Calteau A."/>
            <person name="Chiapello H."/>
            <person name="Clermont O."/>
            <person name="Cruveiller S."/>
            <person name="Danchin A."/>
            <person name="Diard M."/>
            <person name="Dossat C."/>
            <person name="Karoui M.E."/>
            <person name="Frapy E."/>
            <person name="Garry L."/>
            <person name="Ghigo J.M."/>
            <person name="Gilles A.M."/>
            <person name="Johnson J."/>
            <person name="Le Bouguenec C."/>
            <person name="Lescat M."/>
            <person name="Mangenot S."/>
            <person name="Martinez-Jehanne V."/>
            <person name="Matic I."/>
            <person name="Nassif X."/>
            <person name="Oztas S."/>
            <person name="Petit M.A."/>
            <person name="Pichon C."/>
            <person name="Rouy Z."/>
            <person name="Ruf C.S."/>
            <person name="Schneider D."/>
            <person name="Tourret J."/>
            <person name="Vacherie B."/>
            <person name="Vallenet D."/>
            <person name="Medigue C."/>
            <person name="Rocha E.P.C."/>
            <person name="Denamur E."/>
        </authorList>
    </citation>
    <scope>NUCLEOTIDE SEQUENCE [LARGE SCALE GENOMIC DNA]</scope>
    <source>
        <strain>ED1a</strain>
    </source>
</reference>
<protein>
    <recommendedName>
        <fullName evidence="1">Fatty acid metabolism regulator protein</fullName>
    </recommendedName>
</protein>
<keyword id="KW-0010">Activator</keyword>
<keyword id="KW-0963">Cytoplasm</keyword>
<keyword id="KW-0238">DNA-binding</keyword>
<keyword id="KW-0276">Fatty acid metabolism</keyword>
<keyword id="KW-0443">Lipid metabolism</keyword>
<keyword id="KW-0678">Repressor</keyword>
<keyword id="KW-0804">Transcription</keyword>
<keyword id="KW-0805">Transcription regulation</keyword>
<dbReference type="EMBL" id="CU928162">
    <property type="protein sequence ID" value="CAR07529.1"/>
    <property type="molecule type" value="Genomic_DNA"/>
</dbReference>
<dbReference type="RefSeq" id="WP_000234823.1">
    <property type="nucleotide sequence ID" value="NC_011745.1"/>
</dbReference>
<dbReference type="SMR" id="B7MTW5"/>
<dbReference type="GeneID" id="93776245"/>
<dbReference type="KEGG" id="ecq:ECED1_1329"/>
<dbReference type="HOGENOM" id="CLU_017584_9_4_6"/>
<dbReference type="Proteomes" id="UP000000748">
    <property type="component" value="Chromosome"/>
</dbReference>
<dbReference type="GO" id="GO:0005737">
    <property type="term" value="C:cytoplasm"/>
    <property type="evidence" value="ECO:0007669"/>
    <property type="project" value="UniProtKB-SubCell"/>
</dbReference>
<dbReference type="GO" id="GO:0003677">
    <property type="term" value="F:DNA binding"/>
    <property type="evidence" value="ECO:0007669"/>
    <property type="project" value="UniProtKB-KW"/>
</dbReference>
<dbReference type="GO" id="GO:0003700">
    <property type="term" value="F:DNA-binding transcription factor activity"/>
    <property type="evidence" value="ECO:0007669"/>
    <property type="project" value="UniProtKB-UniRule"/>
</dbReference>
<dbReference type="GO" id="GO:0000062">
    <property type="term" value="F:fatty-acyl-CoA binding"/>
    <property type="evidence" value="ECO:0007669"/>
    <property type="project" value="InterPro"/>
</dbReference>
<dbReference type="GO" id="GO:0006631">
    <property type="term" value="P:fatty acid metabolic process"/>
    <property type="evidence" value="ECO:0007669"/>
    <property type="project" value="UniProtKB-KW"/>
</dbReference>
<dbReference type="GO" id="GO:0019217">
    <property type="term" value="P:regulation of fatty acid metabolic process"/>
    <property type="evidence" value="ECO:0007669"/>
    <property type="project" value="UniProtKB-UniRule"/>
</dbReference>
<dbReference type="CDD" id="cd07377">
    <property type="entry name" value="WHTH_GntR"/>
    <property type="match status" value="1"/>
</dbReference>
<dbReference type="FunFam" id="1.10.10.10:FF:000036">
    <property type="entry name" value="Fatty acid metabolism regulator protein"/>
    <property type="match status" value="1"/>
</dbReference>
<dbReference type="FunFam" id="1.20.120.530:FF:000003">
    <property type="entry name" value="Fatty acid metabolism regulator protein"/>
    <property type="match status" value="1"/>
</dbReference>
<dbReference type="Gene3D" id="1.20.120.530">
    <property type="entry name" value="GntR ligand-binding domain-like"/>
    <property type="match status" value="1"/>
</dbReference>
<dbReference type="Gene3D" id="1.10.10.10">
    <property type="entry name" value="Winged helix-like DNA-binding domain superfamily/Winged helix DNA-binding domain"/>
    <property type="match status" value="1"/>
</dbReference>
<dbReference type="HAMAP" id="MF_00696">
    <property type="entry name" value="HTH_FadR"/>
    <property type="match status" value="1"/>
</dbReference>
<dbReference type="InterPro" id="IPR014178">
    <property type="entry name" value="FA-response_TF_FadR"/>
</dbReference>
<dbReference type="InterPro" id="IPR028374">
    <property type="entry name" value="FadR_C"/>
</dbReference>
<dbReference type="InterPro" id="IPR008920">
    <property type="entry name" value="TF_FadR/GntR_C"/>
</dbReference>
<dbReference type="InterPro" id="IPR000524">
    <property type="entry name" value="Tscrpt_reg_HTH_GntR"/>
</dbReference>
<dbReference type="InterPro" id="IPR036388">
    <property type="entry name" value="WH-like_DNA-bd_sf"/>
</dbReference>
<dbReference type="InterPro" id="IPR036390">
    <property type="entry name" value="WH_DNA-bd_sf"/>
</dbReference>
<dbReference type="NCBIfam" id="TIGR02812">
    <property type="entry name" value="fadR_gamma"/>
    <property type="match status" value="1"/>
</dbReference>
<dbReference type="NCBIfam" id="NF003444">
    <property type="entry name" value="PRK04984.1"/>
    <property type="match status" value="1"/>
</dbReference>
<dbReference type="PANTHER" id="PTHR43537:SF52">
    <property type="entry name" value="FATTY ACID METABOLISM REGULATOR PROTEIN"/>
    <property type="match status" value="1"/>
</dbReference>
<dbReference type="PANTHER" id="PTHR43537">
    <property type="entry name" value="TRANSCRIPTIONAL REGULATOR, GNTR FAMILY"/>
    <property type="match status" value="1"/>
</dbReference>
<dbReference type="Pfam" id="PF07840">
    <property type="entry name" value="FadR_C"/>
    <property type="match status" value="1"/>
</dbReference>
<dbReference type="Pfam" id="PF00392">
    <property type="entry name" value="GntR"/>
    <property type="match status" value="1"/>
</dbReference>
<dbReference type="PRINTS" id="PR00035">
    <property type="entry name" value="HTHGNTR"/>
</dbReference>
<dbReference type="SMART" id="SM00345">
    <property type="entry name" value="HTH_GNTR"/>
    <property type="match status" value="1"/>
</dbReference>
<dbReference type="SUPFAM" id="SSF48008">
    <property type="entry name" value="GntR ligand-binding domain-like"/>
    <property type="match status" value="1"/>
</dbReference>
<dbReference type="SUPFAM" id="SSF46785">
    <property type="entry name" value="Winged helix' DNA-binding domain"/>
    <property type="match status" value="1"/>
</dbReference>
<dbReference type="PROSITE" id="PS50949">
    <property type="entry name" value="HTH_GNTR"/>
    <property type="match status" value="1"/>
</dbReference>
<evidence type="ECO:0000255" key="1">
    <source>
        <dbReference type="HAMAP-Rule" id="MF_00696"/>
    </source>
</evidence>
<sequence length="239" mass="26969">MVIKAQSPAGFAEEYIIESIWNNRFPPGTILPAERELSELIGVTRTTLREVLQRLARDGWLTIQHGKPTKVNNFWETSGLNILETLARLDHESVPQLIDNLLSVRTNISTIFIRTAFRQHPDKAQEVLATANEVADHADAFAELDYNIFRGLAFASGNPIYGLILNGMKGLYTRIGRHYFANPEARSLALGFYHKLSALCSEGAHDQVYETVRRYGHESGEIWHRMQKNLPGDLAIQGR</sequence>
<accession>B7MTW5</accession>
<feature type="chain" id="PRO_1000201044" description="Fatty acid metabolism regulator protein">
    <location>
        <begin position="1"/>
        <end position="239"/>
    </location>
</feature>
<feature type="domain" description="HTH gntR-type" evidence="1">
    <location>
        <begin position="6"/>
        <end position="74"/>
    </location>
</feature>
<feature type="DNA-binding region" description="H-T-H motif" evidence="1">
    <location>
        <begin position="34"/>
        <end position="53"/>
    </location>
</feature>
<proteinExistence type="inferred from homology"/>
<name>FADR_ECO81</name>
<comment type="function">
    <text evidence="1">Multifunctional regulator of fatty acid metabolism.</text>
</comment>
<comment type="subunit">
    <text evidence="1">Homodimer.</text>
</comment>
<comment type="subcellular location">
    <subcellularLocation>
        <location evidence="1">Cytoplasm</location>
    </subcellularLocation>
</comment>